<organism>
    <name type="scientific">Escherichia coli O157:H7</name>
    <dbReference type="NCBI Taxonomy" id="83334"/>
    <lineage>
        <taxon>Bacteria</taxon>
        <taxon>Pseudomonadati</taxon>
        <taxon>Pseudomonadota</taxon>
        <taxon>Gammaproteobacteria</taxon>
        <taxon>Enterobacterales</taxon>
        <taxon>Enterobacteriaceae</taxon>
        <taxon>Escherichia</taxon>
    </lineage>
</organism>
<sequence length="309" mass="34516">MERLKRMSVFAKVVEFGSFTAAARQLQMSVSSISQTVSKLEDELQVKLLNRSTRSIGLTEAGRIYYQGCRRMLHEVQDVHEQLYAFNNTPIGTLRIGCSSTMAQNVLAGLTAKMLKEYPGLSVNLVTGIPAPDLIADGLDVVIRVGALQDSSLFSRRLGAMPMVVCAAKSYLTQYGIPEKPADLSSHSWLEYSVRPDNEFELIAPEGISTRLIPQGRFVTNDPMTLVRWLTAGAGIAYVPLMWVINEINRGELEILLPRYQSDPRPVYALYTEKDKLPLKVQVVINSLTDYFVEVGKLFQEMHGRGKEK</sequence>
<evidence type="ECO:0000255" key="1">
    <source>
        <dbReference type="PROSITE-ProRule" id="PRU00253"/>
    </source>
</evidence>
<evidence type="ECO:0000269" key="2">
    <source>
    </source>
</evidence>
<evidence type="ECO:0000269" key="3">
    <source>
    </source>
</evidence>
<evidence type="ECO:0000269" key="4">
    <source>
    </source>
</evidence>
<evidence type="ECO:0000303" key="5">
    <source>
    </source>
</evidence>
<evidence type="ECO:0000305" key="6"/>
<gene>
    <name evidence="5" type="primary">qseA</name>
    <name type="ordered locus">Z4602</name>
    <name type="ordered locus">ECs4116</name>
</gene>
<name>QSEA_ECO57</name>
<accession>P67664</accession>
<accession>P45691</accession>
<feature type="chain" id="PRO_0000105582" description="Quorum-sensing regulator A">
    <location>
        <begin position="1"/>
        <end position="309"/>
    </location>
</feature>
<feature type="domain" description="HTH lysR-type" evidence="1">
    <location>
        <begin position="1"/>
        <end position="59"/>
    </location>
</feature>
<feature type="DNA-binding region" description="H-T-H motif" evidence="1">
    <location>
        <begin position="19"/>
        <end position="38"/>
    </location>
</feature>
<comment type="function">
    <text evidence="2 3 4">Transcriptional regulator that plays an important role in the regulation of virulence genes (PubMed:12011002, PubMed:17339361, PubMed:20444105). It contributes to the regulation of the locus of enterocyte effacement (LEE), a chromosomal pathogenicity island that contains five major operons (LEE1 through LEE5) and encodes proteins involved in the formation of attaching and effacing (AE) lesions by enterohaemorrhagic E.coli (EHEC) (PubMed:12011002, PubMed:20444105). Activates the expression of the first gene of the LEE1 operon, encoding the transcriptional regulator Ler, which in turn activates the expression of all other LEE genes (PubMed:12011002, PubMed:17339361, PubMed:20444105). Acts by binding directly to the P1 and P2 promoter sites of LEE1 (PubMed:17339361, PubMed:20444105). In addition, it can regulate, through direct interaction, expression of numerous genes located in EHEC-specific O-islands and its own expression (PubMed:20444105). It also regulates genes involved in metabolism, regulation and cell-to-cell signaling, suggesting that it acts as a global regulator (PubMed:20444105). It can also regulate expression of small RNAs (sRNAs) (PubMed:20444105). May act as an activator or repressor of its target genes (PubMed:20444105).</text>
</comment>
<comment type="developmental stage">
    <text evidence="4">Most highly expressed during late-exponential growth (PubMed:20444105). Activation of ler at both the P2 and P1 promoter sites occurs mainly at late-exponential growth phase (PubMed:20444105).</text>
</comment>
<comment type="induction">
    <text evidence="2 4">Expression is up-regulated by quorum sensing (PubMed:12011002). Negatively autoregulated (PubMed:20444105).</text>
</comment>
<comment type="disruption phenotype">
    <text evidence="2">Deletion of the gene leads to a striking reduction of type III secretion activity (PubMed:12011002). The mutation does not abolish the ability of EHEC to produce AI-2, and does not affect Stx production, flagella production, motility or the production of attaching and effacing (AE) lesions (PubMed:12011002).</text>
</comment>
<comment type="similarity">
    <text evidence="6">Belongs to the LysR transcriptional regulatory family.</text>
</comment>
<reference key="1">
    <citation type="journal article" date="2001" name="Nature">
        <title>Genome sequence of enterohaemorrhagic Escherichia coli O157:H7.</title>
        <authorList>
            <person name="Perna N.T."/>
            <person name="Plunkett G. III"/>
            <person name="Burland V."/>
            <person name="Mau B."/>
            <person name="Glasner J.D."/>
            <person name="Rose D.J."/>
            <person name="Mayhew G.F."/>
            <person name="Evans P.S."/>
            <person name="Gregor J."/>
            <person name="Kirkpatrick H.A."/>
            <person name="Posfai G."/>
            <person name="Hackett J."/>
            <person name="Klink S."/>
            <person name="Boutin A."/>
            <person name="Shao Y."/>
            <person name="Miller L."/>
            <person name="Grotbeck E.J."/>
            <person name="Davis N.W."/>
            <person name="Lim A."/>
            <person name="Dimalanta E.T."/>
            <person name="Potamousis K."/>
            <person name="Apodaca J."/>
            <person name="Anantharaman T.S."/>
            <person name="Lin J."/>
            <person name="Yen G."/>
            <person name="Schwartz D.C."/>
            <person name="Welch R.A."/>
            <person name="Blattner F.R."/>
        </authorList>
    </citation>
    <scope>NUCLEOTIDE SEQUENCE [LARGE SCALE GENOMIC DNA]</scope>
    <source>
        <strain>O157:H7 / EDL933 / ATCC 700927 / EHEC</strain>
    </source>
</reference>
<reference key="2">
    <citation type="journal article" date="2001" name="DNA Res.">
        <title>Complete genome sequence of enterohemorrhagic Escherichia coli O157:H7 and genomic comparison with a laboratory strain K-12.</title>
        <authorList>
            <person name="Hayashi T."/>
            <person name="Makino K."/>
            <person name="Ohnishi M."/>
            <person name="Kurokawa K."/>
            <person name="Ishii K."/>
            <person name="Yokoyama K."/>
            <person name="Han C.-G."/>
            <person name="Ohtsubo E."/>
            <person name="Nakayama K."/>
            <person name="Murata T."/>
            <person name="Tanaka M."/>
            <person name="Tobe T."/>
            <person name="Iida T."/>
            <person name="Takami H."/>
            <person name="Honda T."/>
            <person name="Sasakawa C."/>
            <person name="Ogasawara N."/>
            <person name="Yasunaga T."/>
            <person name="Kuhara S."/>
            <person name="Shiba T."/>
            <person name="Hattori M."/>
            <person name="Shinagawa H."/>
        </authorList>
    </citation>
    <scope>NUCLEOTIDE SEQUENCE [LARGE SCALE GENOMIC DNA]</scope>
    <source>
        <strain>O157:H7 / Sakai / RIMD 0509952 / EHEC</strain>
    </source>
</reference>
<reference key="3">
    <citation type="journal article" date="2002" name="Infect. Immun.">
        <title>Quorum-sensing Escherichia coli regulator A: a regulator of the LysR family involved in the regulation of the locus of enterocyte effacement pathogenicity island in enterohemorrhagic E. coli.</title>
        <authorList>
            <person name="Sperandio V."/>
            <person name="Li C.C."/>
            <person name="Kaper J.B."/>
        </authorList>
    </citation>
    <scope>FUNCTION</scope>
    <scope>INDUCTION</scope>
    <scope>DISRUPTION PHENOTYPE</scope>
    <source>
        <strain>O157:H7 / 86-24 / EHEC</strain>
    </source>
</reference>
<reference key="4">
    <citation type="journal article" date="2007" name="Infect. Immun.">
        <title>QseA directly activates transcription of LEE1 in enterohemorrhagic Escherichia coli.</title>
        <authorList>
            <person name="Sharp F.C."/>
            <person name="Sperandio V."/>
        </authorList>
    </citation>
    <scope>FUNCTION</scope>
    <scope>DNA-BINDING</scope>
    <source>
        <strain>O157:H7 / 86-24 / EHEC</strain>
    </source>
</reference>
<reference key="5">
    <citation type="journal article" date="2010" name="Mol. Microbiol.">
        <title>The LysR-type regulator QseA regulates both characterized and putative virulence genes in enterohaemorrhagic Escherichia coli O157:H7.</title>
        <authorList>
            <person name="Kendall M.M."/>
            <person name="Rasko D.A."/>
            <person name="Sperandio V."/>
        </authorList>
    </citation>
    <scope>FUNCTION</scope>
    <scope>DNA-BINDING</scope>
    <scope>DEVELOPMENTAL STAGE</scope>
    <scope>INDUCTION</scope>
    <source>
        <strain>O157:H7 / 86-24 / EHEC</strain>
    </source>
</reference>
<keyword id="KW-0010">Activator</keyword>
<keyword id="KW-0238">DNA-binding</keyword>
<keyword id="KW-1185">Reference proteome</keyword>
<keyword id="KW-0678">Repressor</keyword>
<keyword id="KW-0804">Transcription</keyword>
<keyword id="KW-0805">Transcription regulation</keyword>
<keyword id="KW-0843">Virulence</keyword>
<proteinExistence type="evidence at protein level"/>
<dbReference type="EMBL" id="AE005174">
    <property type="protein sequence ID" value="AAG58371.1"/>
    <property type="molecule type" value="Genomic_DNA"/>
</dbReference>
<dbReference type="EMBL" id="BA000007">
    <property type="protein sequence ID" value="BAB37539.1"/>
    <property type="molecule type" value="Genomic_DNA"/>
</dbReference>
<dbReference type="PIR" id="D91143">
    <property type="entry name" value="D91143"/>
</dbReference>
<dbReference type="RefSeq" id="NP_312143.1">
    <property type="nucleotide sequence ID" value="NC_002695.1"/>
</dbReference>
<dbReference type="RefSeq" id="WP_000440317.1">
    <property type="nucleotide sequence ID" value="NZ_VOAI01000014.1"/>
</dbReference>
<dbReference type="SMR" id="P67664"/>
<dbReference type="STRING" id="155864.Z4602"/>
<dbReference type="GeneID" id="916027"/>
<dbReference type="GeneID" id="93778742"/>
<dbReference type="KEGG" id="ece:Z4602"/>
<dbReference type="KEGG" id="ecs:ECs_4116"/>
<dbReference type="PATRIC" id="fig|386585.9.peg.4297"/>
<dbReference type="eggNOG" id="COG0583">
    <property type="taxonomic scope" value="Bacteria"/>
</dbReference>
<dbReference type="HOGENOM" id="CLU_039613_16_2_6"/>
<dbReference type="OMA" id="DLANHSW"/>
<dbReference type="Proteomes" id="UP000000558">
    <property type="component" value="Chromosome"/>
</dbReference>
<dbReference type="Proteomes" id="UP000002519">
    <property type="component" value="Chromosome"/>
</dbReference>
<dbReference type="GO" id="GO:0003677">
    <property type="term" value="F:DNA binding"/>
    <property type="evidence" value="ECO:0007669"/>
    <property type="project" value="UniProtKB-KW"/>
</dbReference>
<dbReference type="GO" id="GO:0003700">
    <property type="term" value="F:DNA-binding transcription factor activity"/>
    <property type="evidence" value="ECO:0007669"/>
    <property type="project" value="InterPro"/>
</dbReference>
<dbReference type="CDD" id="cd08422">
    <property type="entry name" value="PBP2_CrgA_like"/>
    <property type="match status" value="1"/>
</dbReference>
<dbReference type="FunFam" id="3.40.190.290:FF:000003">
    <property type="entry name" value="HTH-type transcriptional activator AaeR"/>
    <property type="match status" value="1"/>
</dbReference>
<dbReference type="FunFam" id="1.10.10.10:FF:000001">
    <property type="entry name" value="LysR family transcriptional regulator"/>
    <property type="match status" value="1"/>
</dbReference>
<dbReference type="Gene3D" id="3.40.190.290">
    <property type="match status" value="1"/>
</dbReference>
<dbReference type="Gene3D" id="1.10.10.10">
    <property type="entry name" value="Winged helix-like DNA-binding domain superfamily/Winged helix DNA-binding domain"/>
    <property type="match status" value="1"/>
</dbReference>
<dbReference type="InterPro" id="IPR005119">
    <property type="entry name" value="LysR_subst-bd"/>
</dbReference>
<dbReference type="InterPro" id="IPR000847">
    <property type="entry name" value="Tscrpt_reg_HTH_LysR"/>
</dbReference>
<dbReference type="InterPro" id="IPR036388">
    <property type="entry name" value="WH-like_DNA-bd_sf"/>
</dbReference>
<dbReference type="InterPro" id="IPR036390">
    <property type="entry name" value="WH_DNA-bd_sf"/>
</dbReference>
<dbReference type="NCBIfam" id="NF007917">
    <property type="entry name" value="PRK10632.1"/>
    <property type="match status" value="1"/>
</dbReference>
<dbReference type="PANTHER" id="PTHR30537:SF5">
    <property type="entry name" value="HTH-TYPE TRANSCRIPTIONAL ACTIVATOR TTDR-RELATED"/>
    <property type="match status" value="1"/>
</dbReference>
<dbReference type="PANTHER" id="PTHR30537">
    <property type="entry name" value="HTH-TYPE TRANSCRIPTIONAL REGULATOR"/>
    <property type="match status" value="1"/>
</dbReference>
<dbReference type="Pfam" id="PF00126">
    <property type="entry name" value="HTH_1"/>
    <property type="match status" value="1"/>
</dbReference>
<dbReference type="Pfam" id="PF03466">
    <property type="entry name" value="LysR_substrate"/>
    <property type="match status" value="1"/>
</dbReference>
<dbReference type="SUPFAM" id="SSF53850">
    <property type="entry name" value="Periplasmic binding protein-like II"/>
    <property type="match status" value="1"/>
</dbReference>
<dbReference type="SUPFAM" id="SSF46785">
    <property type="entry name" value="Winged helix' DNA-binding domain"/>
    <property type="match status" value="1"/>
</dbReference>
<dbReference type="PROSITE" id="PS50931">
    <property type="entry name" value="HTH_LYSR"/>
    <property type="match status" value="1"/>
</dbReference>
<protein>
    <recommendedName>
        <fullName evidence="5">Quorum-sensing regulator A</fullName>
    </recommendedName>
</protein>